<proteinExistence type="inferred from homology"/>
<sequence length="288" mass="32751">MKLIVVSGRSGSGKTVALRVLEDLGYYCVDNLPVSLLFQLVAELRGKYDQIAVSIDVRNLPATAEDLVSILDEIRQHQDLQFSSFFFDADNATLLKRYGESRRLHPLSRQQFTLAQAIRQETDLLSPLSSSADLRIDTSHISIHELSEQIRERVLGKKEHELVMVFESFGFKHGIAKDADFVFDARFLPNPHWIAELKPLTGLDEPVQRYLQSQPDVVKYINQLISLLETWLPQLERNNRSYVTVAIGCTGGQHRSVFIAEQLANHFLVLGKNVQRRHRTLEKLHAPG</sequence>
<feature type="chain" id="PRO_1000212366" description="Nucleotide-binding protein Tola_2941">
    <location>
        <begin position="1"/>
        <end position="288"/>
    </location>
</feature>
<feature type="binding site" evidence="1">
    <location>
        <begin position="8"/>
        <end position="15"/>
    </location>
    <ligand>
        <name>ATP</name>
        <dbReference type="ChEBI" id="CHEBI:30616"/>
    </ligand>
</feature>
<feature type="binding site" evidence="1">
    <location>
        <begin position="56"/>
        <end position="59"/>
    </location>
    <ligand>
        <name>GTP</name>
        <dbReference type="ChEBI" id="CHEBI:37565"/>
    </ligand>
</feature>
<accession>C4LCZ9</accession>
<name>Y2941_TOLAT</name>
<dbReference type="EMBL" id="CP001616">
    <property type="protein sequence ID" value="ACQ94530.1"/>
    <property type="molecule type" value="Genomic_DNA"/>
</dbReference>
<dbReference type="RefSeq" id="WP_015879979.1">
    <property type="nucleotide sequence ID" value="NC_012691.1"/>
</dbReference>
<dbReference type="SMR" id="C4LCZ9"/>
<dbReference type="STRING" id="595494.Tola_2941"/>
<dbReference type="KEGG" id="tau:Tola_2941"/>
<dbReference type="eggNOG" id="COG1660">
    <property type="taxonomic scope" value="Bacteria"/>
</dbReference>
<dbReference type="HOGENOM" id="CLU_059558_1_1_6"/>
<dbReference type="OrthoDB" id="9784461at2"/>
<dbReference type="Proteomes" id="UP000009073">
    <property type="component" value="Chromosome"/>
</dbReference>
<dbReference type="GO" id="GO:0005524">
    <property type="term" value="F:ATP binding"/>
    <property type="evidence" value="ECO:0007669"/>
    <property type="project" value="UniProtKB-UniRule"/>
</dbReference>
<dbReference type="GO" id="GO:0005525">
    <property type="term" value="F:GTP binding"/>
    <property type="evidence" value="ECO:0007669"/>
    <property type="project" value="UniProtKB-UniRule"/>
</dbReference>
<dbReference type="Gene3D" id="3.40.50.300">
    <property type="entry name" value="P-loop containing nucleotide triphosphate hydrolases"/>
    <property type="match status" value="1"/>
</dbReference>
<dbReference type="HAMAP" id="MF_00636">
    <property type="entry name" value="RapZ_like"/>
    <property type="match status" value="1"/>
</dbReference>
<dbReference type="InterPro" id="IPR027417">
    <property type="entry name" value="P-loop_NTPase"/>
</dbReference>
<dbReference type="InterPro" id="IPR005337">
    <property type="entry name" value="RapZ-like"/>
</dbReference>
<dbReference type="InterPro" id="IPR053930">
    <property type="entry name" value="RapZ-like_N"/>
</dbReference>
<dbReference type="InterPro" id="IPR053931">
    <property type="entry name" value="RapZ_C"/>
</dbReference>
<dbReference type="NCBIfam" id="NF003828">
    <property type="entry name" value="PRK05416.1"/>
    <property type="match status" value="1"/>
</dbReference>
<dbReference type="PANTHER" id="PTHR30448">
    <property type="entry name" value="RNASE ADAPTER PROTEIN RAPZ"/>
    <property type="match status" value="1"/>
</dbReference>
<dbReference type="PANTHER" id="PTHR30448:SF0">
    <property type="entry name" value="RNASE ADAPTER PROTEIN RAPZ"/>
    <property type="match status" value="1"/>
</dbReference>
<dbReference type="Pfam" id="PF22740">
    <property type="entry name" value="PapZ_C"/>
    <property type="match status" value="1"/>
</dbReference>
<dbReference type="Pfam" id="PF03668">
    <property type="entry name" value="RapZ-like_N"/>
    <property type="match status" value="1"/>
</dbReference>
<dbReference type="PIRSF" id="PIRSF005052">
    <property type="entry name" value="P-loopkin"/>
    <property type="match status" value="1"/>
</dbReference>
<dbReference type="SUPFAM" id="SSF52540">
    <property type="entry name" value="P-loop containing nucleoside triphosphate hydrolases"/>
    <property type="match status" value="1"/>
</dbReference>
<reference key="1">
    <citation type="submission" date="2009-05" db="EMBL/GenBank/DDBJ databases">
        <title>Complete sequence of Tolumonas auensis DSM 9187.</title>
        <authorList>
            <consortium name="US DOE Joint Genome Institute"/>
            <person name="Lucas S."/>
            <person name="Copeland A."/>
            <person name="Lapidus A."/>
            <person name="Glavina del Rio T."/>
            <person name="Tice H."/>
            <person name="Bruce D."/>
            <person name="Goodwin L."/>
            <person name="Pitluck S."/>
            <person name="Chertkov O."/>
            <person name="Brettin T."/>
            <person name="Detter J.C."/>
            <person name="Han C."/>
            <person name="Larimer F."/>
            <person name="Land M."/>
            <person name="Hauser L."/>
            <person name="Kyrpides N."/>
            <person name="Mikhailova N."/>
            <person name="Spring S."/>
            <person name="Beller H."/>
        </authorList>
    </citation>
    <scope>NUCLEOTIDE SEQUENCE [LARGE SCALE GENOMIC DNA]</scope>
    <source>
        <strain>DSM 9187 / NBRC 110442 / TA 4</strain>
    </source>
</reference>
<gene>
    <name type="ordered locus">Tola_2941</name>
</gene>
<comment type="function">
    <text evidence="1">Displays ATPase and GTPase activities.</text>
</comment>
<comment type="similarity">
    <text evidence="1">Belongs to the RapZ-like family.</text>
</comment>
<protein>
    <recommendedName>
        <fullName evidence="1">Nucleotide-binding protein Tola_2941</fullName>
    </recommendedName>
</protein>
<organism>
    <name type="scientific">Tolumonas auensis (strain DSM 9187 / NBRC 110442 / TA 4)</name>
    <dbReference type="NCBI Taxonomy" id="595494"/>
    <lineage>
        <taxon>Bacteria</taxon>
        <taxon>Pseudomonadati</taxon>
        <taxon>Pseudomonadota</taxon>
        <taxon>Gammaproteobacteria</taxon>
        <taxon>Aeromonadales</taxon>
        <taxon>Aeromonadaceae</taxon>
        <taxon>Tolumonas</taxon>
    </lineage>
</organism>
<keyword id="KW-0067">ATP-binding</keyword>
<keyword id="KW-0342">GTP-binding</keyword>
<keyword id="KW-0547">Nucleotide-binding</keyword>
<keyword id="KW-1185">Reference proteome</keyword>
<evidence type="ECO:0000255" key="1">
    <source>
        <dbReference type="HAMAP-Rule" id="MF_00636"/>
    </source>
</evidence>